<name>RS4_LACP3</name>
<keyword id="KW-1185">Reference proteome</keyword>
<keyword id="KW-0687">Ribonucleoprotein</keyword>
<keyword id="KW-0689">Ribosomal protein</keyword>
<keyword id="KW-0694">RNA-binding</keyword>
<keyword id="KW-0699">rRNA-binding</keyword>
<protein>
    <recommendedName>
        <fullName evidence="1">Small ribosomal subunit protein uS4</fullName>
    </recommendedName>
    <alternativeName>
        <fullName evidence="2">30S ribosomal protein S4</fullName>
    </alternativeName>
</protein>
<dbReference type="EMBL" id="CP000423">
    <property type="protein sequence ID" value="ABJ70029.1"/>
    <property type="molecule type" value="Genomic_DNA"/>
</dbReference>
<dbReference type="RefSeq" id="WP_003565106.1">
    <property type="nucleotide sequence ID" value="NC_008526.1"/>
</dbReference>
<dbReference type="RefSeq" id="YP_806471.1">
    <property type="nucleotide sequence ID" value="NC_008526.1"/>
</dbReference>
<dbReference type="SMR" id="Q039U3"/>
<dbReference type="STRING" id="321967.LSEI_1244"/>
<dbReference type="PaxDb" id="321967-LSEI_1244"/>
<dbReference type="GeneID" id="57089924"/>
<dbReference type="KEGG" id="lca:LSEI_1244"/>
<dbReference type="PATRIC" id="fig|321967.11.peg.1217"/>
<dbReference type="HOGENOM" id="CLU_092403_0_1_9"/>
<dbReference type="Proteomes" id="UP000001651">
    <property type="component" value="Chromosome"/>
</dbReference>
<dbReference type="GO" id="GO:0015935">
    <property type="term" value="C:small ribosomal subunit"/>
    <property type="evidence" value="ECO:0007669"/>
    <property type="project" value="InterPro"/>
</dbReference>
<dbReference type="GO" id="GO:0019843">
    <property type="term" value="F:rRNA binding"/>
    <property type="evidence" value="ECO:0007669"/>
    <property type="project" value="UniProtKB-UniRule"/>
</dbReference>
<dbReference type="GO" id="GO:0003735">
    <property type="term" value="F:structural constituent of ribosome"/>
    <property type="evidence" value="ECO:0007669"/>
    <property type="project" value="InterPro"/>
</dbReference>
<dbReference type="GO" id="GO:0042274">
    <property type="term" value="P:ribosomal small subunit biogenesis"/>
    <property type="evidence" value="ECO:0007669"/>
    <property type="project" value="TreeGrafter"/>
</dbReference>
<dbReference type="GO" id="GO:0006412">
    <property type="term" value="P:translation"/>
    <property type="evidence" value="ECO:0007669"/>
    <property type="project" value="UniProtKB-UniRule"/>
</dbReference>
<dbReference type="CDD" id="cd00165">
    <property type="entry name" value="S4"/>
    <property type="match status" value="1"/>
</dbReference>
<dbReference type="FunFam" id="3.10.290.10:FF:000001">
    <property type="entry name" value="30S ribosomal protein S4"/>
    <property type="match status" value="1"/>
</dbReference>
<dbReference type="Gene3D" id="1.10.1050.10">
    <property type="entry name" value="Ribosomal Protein S4 Delta 41, Chain A, domain 1"/>
    <property type="match status" value="1"/>
</dbReference>
<dbReference type="Gene3D" id="3.10.290.10">
    <property type="entry name" value="RNA-binding S4 domain"/>
    <property type="match status" value="1"/>
</dbReference>
<dbReference type="HAMAP" id="MF_01306_B">
    <property type="entry name" value="Ribosomal_uS4_B"/>
    <property type="match status" value="1"/>
</dbReference>
<dbReference type="InterPro" id="IPR022801">
    <property type="entry name" value="Ribosomal_uS4"/>
</dbReference>
<dbReference type="InterPro" id="IPR005709">
    <property type="entry name" value="Ribosomal_uS4_bac-type"/>
</dbReference>
<dbReference type="InterPro" id="IPR018079">
    <property type="entry name" value="Ribosomal_uS4_CS"/>
</dbReference>
<dbReference type="InterPro" id="IPR001912">
    <property type="entry name" value="Ribosomal_uS4_N"/>
</dbReference>
<dbReference type="InterPro" id="IPR002942">
    <property type="entry name" value="S4_RNA-bd"/>
</dbReference>
<dbReference type="InterPro" id="IPR036986">
    <property type="entry name" value="S4_RNA-bd_sf"/>
</dbReference>
<dbReference type="NCBIfam" id="NF003717">
    <property type="entry name" value="PRK05327.1"/>
    <property type="match status" value="1"/>
</dbReference>
<dbReference type="NCBIfam" id="TIGR01017">
    <property type="entry name" value="rpsD_bact"/>
    <property type="match status" value="1"/>
</dbReference>
<dbReference type="PANTHER" id="PTHR11831">
    <property type="entry name" value="30S 40S RIBOSOMAL PROTEIN"/>
    <property type="match status" value="1"/>
</dbReference>
<dbReference type="PANTHER" id="PTHR11831:SF4">
    <property type="entry name" value="SMALL RIBOSOMAL SUBUNIT PROTEIN US4M"/>
    <property type="match status" value="1"/>
</dbReference>
<dbReference type="Pfam" id="PF00163">
    <property type="entry name" value="Ribosomal_S4"/>
    <property type="match status" value="1"/>
</dbReference>
<dbReference type="Pfam" id="PF01479">
    <property type="entry name" value="S4"/>
    <property type="match status" value="1"/>
</dbReference>
<dbReference type="SMART" id="SM01390">
    <property type="entry name" value="Ribosomal_S4"/>
    <property type="match status" value="1"/>
</dbReference>
<dbReference type="SMART" id="SM00363">
    <property type="entry name" value="S4"/>
    <property type="match status" value="1"/>
</dbReference>
<dbReference type="SUPFAM" id="SSF55174">
    <property type="entry name" value="Alpha-L RNA-binding motif"/>
    <property type="match status" value="1"/>
</dbReference>
<dbReference type="PROSITE" id="PS00632">
    <property type="entry name" value="RIBOSOMAL_S4"/>
    <property type="match status" value="1"/>
</dbReference>
<dbReference type="PROSITE" id="PS50889">
    <property type="entry name" value="S4"/>
    <property type="match status" value="1"/>
</dbReference>
<gene>
    <name evidence="1" type="primary">rpsD</name>
    <name type="ordered locus">LSEI_1244</name>
</gene>
<proteinExistence type="inferred from homology"/>
<accession>Q039U3</accession>
<comment type="function">
    <text evidence="1">One of the primary rRNA binding proteins, it binds directly to 16S rRNA where it nucleates assembly of the body of the 30S subunit.</text>
</comment>
<comment type="function">
    <text evidence="1">With S5 and S12 plays an important role in translational accuracy.</text>
</comment>
<comment type="subunit">
    <text evidence="1">Part of the 30S ribosomal subunit. Contacts protein S5. The interaction surface between S4 and S5 is involved in control of translational fidelity.</text>
</comment>
<comment type="similarity">
    <text evidence="1">Belongs to the universal ribosomal protein uS4 family.</text>
</comment>
<feature type="chain" id="PRO_0000293296" description="Small ribosomal subunit protein uS4">
    <location>
        <begin position="1"/>
        <end position="203"/>
    </location>
</feature>
<feature type="domain" description="S4 RNA-binding" evidence="1">
    <location>
        <begin position="93"/>
        <end position="156"/>
    </location>
</feature>
<organism>
    <name type="scientific">Lacticaseibacillus paracasei (strain ATCC 334 / BCRC 17002 / CCUG 31169 / CIP 107868 / KCTC 3260 / NRRL B-441)</name>
    <name type="common">Lactobacillus paracasei</name>
    <dbReference type="NCBI Taxonomy" id="321967"/>
    <lineage>
        <taxon>Bacteria</taxon>
        <taxon>Bacillati</taxon>
        <taxon>Bacillota</taxon>
        <taxon>Bacilli</taxon>
        <taxon>Lactobacillales</taxon>
        <taxon>Lactobacillaceae</taxon>
        <taxon>Lacticaseibacillus</taxon>
    </lineage>
</organism>
<reference key="1">
    <citation type="journal article" date="2006" name="Proc. Natl. Acad. Sci. U.S.A.">
        <title>Comparative genomics of the lactic acid bacteria.</title>
        <authorList>
            <person name="Makarova K.S."/>
            <person name="Slesarev A."/>
            <person name="Wolf Y.I."/>
            <person name="Sorokin A."/>
            <person name="Mirkin B."/>
            <person name="Koonin E.V."/>
            <person name="Pavlov A."/>
            <person name="Pavlova N."/>
            <person name="Karamychev V."/>
            <person name="Polouchine N."/>
            <person name="Shakhova V."/>
            <person name="Grigoriev I."/>
            <person name="Lou Y."/>
            <person name="Rohksar D."/>
            <person name="Lucas S."/>
            <person name="Huang K."/>
            <person name="Goodstein D.M."/>
            <person name="Hawkins T."/>
            <person name="Plengvidhya V."/>
            <person name="Welker D."/>
            <person name="Hughes J."/>
            <person name="Goh Y."/>
            <person name="Benson A."/>
            <person name="Baldwin K."/>
            <person name="Lee J.-H."/>
            <person name="Diaz-Muniz I."/>
            <person name="Dosti B."/>
            <person name="Smeianov V."/>
            <person name="Wechter W."/>
            <person name="Barabote R."/>
            <person name="Lorca G."/>
            <person name="Altermann E."/>
            <person name="Barrangou R."/>
            <person name="Ganesan B."/>
            <person name="Xie Y."/>
            <person name="Rawsthorne H."/>
            <person name="Tamir D."/>
            <person name="Parker C."/>
            <person name="Breidt F."/>
            <person name="Broadbent J.R."/>
            <person name="Hutkins R."/>
            <person name="O'Sullivan D."/>
            <person name="Steele J."/>
            <person name="Unlu G."/>
            <person name="Saier M.H. Jr."/>
            <person name="Klaenhammer T."/>
            <person name="Richardson P."/>
            <person name="Kozyavkin S."/>
            <person name="Weimer B.C."/>
            <person name="Mills D.A."/>
        </authorList>
    </citation>
    <scope>NUCLEOTIDE SEQUENCE [LARGE SCALE GENOMIC DNA]</scope>
    <source>
        <strain>ATCC 334 / BCRC 17002 / CCUG 31169 / CIP 107868 / KCTC 3260 / NRRL B-441</strain>
    </source>
</reference>
<evidence type="ECO:0000255" key="1">
    <source>
        <dbReference type="HAMAP-Rule" id="MF_01306"/>
    </source>
</evidence>
<evidence type="ECO:0000305" key="2"/>
<sequence length="203" mass="23306">MSRYTGPRWKQSRRLGLSLSGTGKELARRPYAPGDHGANNRRKISEYGQQLREKQKLRWMYGLNERQFQNLFLRAGKIKEGTHGDNFMILLETRLDNLVFRLGLASSRPQARQLVNHGHITVDGKRVDIPSYEVEPGQVIALRERSQNLAIVNEAIENTVSRPAYVTFDDTKKTGSLVRLPERGELEPEVDESLVVEYYNQKL</sequence>